<keyword id="KW-0963">Cytoplasm</keyword>
<keyword id="KW-0342">GTP-binding</keyword>
<keyword id="KW-0378">Hydrolase</keyword>
<keyword id="KW-0460">Magnesium</keyword>
<keyword id="KW-0479">Metal-binding</keyword>
<keyword id="KW-0547">Nucleotide-binding</keyword>
<keyword id="KW-0630">Potassium</keyword>
<keyword id="KW-0819">tRNA processing</keyword>
<gene>
    <name evidence="1" type="primary">mnmE</name>
    <name evidence="1" type="synonym">trmE</name>
    <name type="ordered locus">BMA10247_3547</name>
</gene>
<protein>
    <recommendedName>
        <fullName evidence="1">tRNA modification GTPase MnmE</fullName>
        <ecNumber evidence="1">3.6.-.-</ecNumber>
    </recommendedName>
</protein>
<feature type="chain" id="PRO_0000345742" description="tRNA modification GTPase MnmE">
    <location>
        <begin position="1"/>
        <end position="467"/>
    </location>
</feature>
<feature type="domain" description="TrmE-type G">
    <location>
        <begin position="226"/>
        <end position="389"/>
    </location>
</feature>
<feature type="binding site" evidence="1">
    <location>
        <position position="25"/>
    </location>
    <ligand>
        <name>(6S)-5-formyl-5,6,7,8-tetrahydrofolate</name>
        <dbReference type="ChEBI" id="CHEBI:57457"/>
    </ligand>
</feature>
<feature type="binding site" evidence="1">
    <location>
        <position position="87"/>
    </location>
    <ligand>
        <name>(6S)-5-formyl-5,6,7,8-tetrahydrofolate</name>
        <dbReference type="ChEBI" id="CHEBI:57457"/>
    </ligand>
</feature>
<feature type="binding site" evidence="1">
    <location>
        <position position="130"/>
    </location>
    <ligand>
        <name>(6S)-5-formyl-5,6,7,8-tetrahydrofolate</name>
        <dbReference type="ChEBI" id="CHEBI:57457"/>
    </ligand>
</feature>
<feature type="binding site" evidence="1">
    <location>
        <begin position="236"/>
        <end position="241"/>
    </location>
    <ligand>
        <name>GTP</name>
        <dbReference type="ChEBI" id="CHEBI:37565"/>
    </ligand>
</feature>
<feature type="binding site" evidence="1">
    <location>
        <position position="236"/>
    </location>
    <ligand>
        <name>K(+)</name>
        <dbReference type="ChEBI" id="CHEBI:29103"/>
    </ligand>
</feature>
<feature type="binding site" evidence="1">
    <location>
        <position position="240"/>
    </location>
    <ligand>
        <name>Mg(2+)</name>
        <dbReference type="ChEBI" id="CHEBI:18420"/>
    </ligand>
</feature>
<feature type="binding site" evidence="1">
    <location>
        <begin position="255"/>
        <end position="261"/>
    </location>
    <ligand>
        <name>GTP</name>
        <dbReference type="ChEBI" id="CHEBI:37565"/>
    </ligand>
</feature>
<feature type="binding site" evidence="1">
    <location>
        <position position="255"/>
    </location>
    <ligand>
        <name>K(+)</name>
        <dbReference type="ChEBI" id="CHEBI:29103"/>
    </ligand>
</feature>
<feature type="binding site" evidence="1">
    <location>
        <position position="257"/>
    </location>
    <ligand>
        <name>K(+)</name>
        <dbReference type="ChEBI" id="CHEBI:29103"/>
    </ligand>
</feature>
<feature type="binding site" evidence="1">
    <location>
        <position position="260"/>
    </location>
    <ligand>
        <name>K(+)</name>
        <dbReference type="ChEBI" id="CHEBI:29103"/>
    </ligand>
</feature>
<feature type="binding site" evidence="1">
    <location>
        <position position="261"/>
    </location>
    <ligand>
        <name>Mg(2+)</name>
        <dbReference type="ChEBI" id="CHEBI:18420"/>
    </ligand>
</feature>
<feature type="binding site" evidence="1">
    <location>
        <begin position="280"/>
        <end position="283"/>
    </location>
    <ligand>
        <name>GTP</name>
        <dbReference type="ChEBI" id="CHEBI:37565"/>
    </ligand>
</feature>
<feature type="binding site" evidence="1">
    <location>
        <position position="467"/>
    </location>
    <ligand>
        <name>(6S)-5-formyl-5,6,7,8-tetrahydrofolate</name>
        <dbReference type="ChEBI" id="CHEBI:57457"/>
    </ligand>
</feature>
<evidence type="ECO:0000255" key="1">
    <source>
        <dbReference type="HAMAP-Rule" id="MF_00379"/>
    </source>
</evidence>
<evidence type="ECO:0000305" key="2"/>
<accession>A3MS17</accession>
<proteinExistence type="inferred from homology"/>
<dbReference type="EC" id="3.6.-.-" evidence="1"/>
<dbReference type="EMBL" id="CP000548">
    <property type="protein sequence ID" value="ABO05781.1"/>
    <property type="status" value="ALT_INIT"/>
    <property type="molecule type" value="Genomic_DNA"/>
</dbReference>
<dbReference type="RefSeq" id="WP_004524586.1">
    <property type="nucleotide sequence ID" value="NZ_CP007802.1"/>
</dbReference>
<dbReference type="SMR" id="A3MS17"/>
<dbReference type="GeneID" id="93058592"/>
<dbReference type="KEGG" id="bmaz:BM44_2972"/>
<dbReference type="KEGG" id="bmn:BMA10247_3547"/>
<dbReference type="PATRIC" id="fig|320389.8.peg.3349"/>
<dbReference type="GO" id="GO:0005829">
    <property type="term" value="C:cytosol"/>
    <property type="evidence" value="ECO:0007669"/>
    <property type="project" value="TreeGrafter"/>
</dbReference>
<dbReference type="GO" id="GO:0005525">
    <property type="term" value="F:GTP binding"/>
    <property type="evidence" value="ECO:0007669"/>
    <property type="project" value="UniProtKB-UniRule"/>
</dbReference>
<dbReference type="GO" id="GO:0003924">
    <property type="term" value="F:GTPase activity"/>
    <property type="evidence" value="ECO:0007669"/>
    <property type="project" value="UniProtKB-UniRule"/>
</dbReference>
<dbReference type="GO" id="GO:0046872">
    <property type="term" value="F:metal ion binding"/>
    <property type="evidence" value="ECO:0007669"/>
    <property type="project" value="UniProtKB-KW"/>
</dbReference>
<dbReference type="GO" id="GO:0030488">
    <property type="term" value="P:tRNA methylation"/>
    <property type="evidence" value="ECO:0007669"/>
    <property type="project" value="TreeGrafter"/>
</dbReference>
<dbReference type="GO" id="GO:0002098">
    <property type="term" value="P:tRNA wobble uridine modification"/>
    <property type="evidence" value="ECO:0007669"/>
    <property type="project" value="TreeGrafter"/>
</dbReference>
<dbReference type="CDD" id="cd04164">
    <property type="entry name" value="trmE"/>
    <property type="match status" value="1"/>
</dbReference>
<dbReference type="CDD" id="cd14858">
    <property type="entry name" value="TrmE_N"/>
    <property type="match status" value="1"/>
</dbReference>
<dbReference type="Gene3D" id="3.40.50.300">
    <property type="entry name" value="P-loop containing nucleotide triphosphate hydrolases"/>
    <property type="match status" value="1"/>
</dbReference>
<dbReference type="Gene3D" id="3.30.1360.120">
    <property type="entry name" value="Probable tRNA modification gtpase trme, domain 1"/>
    <property type="match status" value="1"/>
</dbReference>
<dbReference type="Gene3D" id="1.20.120.430">
    <property type="entry name" value="tRNA modification GTPase MnmE domain 2"/>
    <property type="match status" value="1"/>
</dbReference>
<dbReference type="HAMAP" id="MF_00379">
    <property type="entry name" value="GTPase_MnmE"/>
    <property type="match status" value="1"/>
</dbReference>
<dbReference type="InterPro" id="IPR031168">
    <property type="entry name" value="G_TrmE"/>
</dbReference>
<dbReference type="InterPro" id="IPR006073">
    <property type="entry name" value="GTP-bd"/>
</dbReference>
<dbReference type="InterPro" id="IPR018948">
    <property type="entry name" value="GTP-bd_TrmE_N"/>
</dbReference>
<dbReference type="InterPro" id="IPR004520">
    <property type="entry name" value="GTPase_MnmE"/>
</dbReference>
<dbReference type="InterPro" id="IPR027368">
    <property type="entry name" value="MnmE_dom2"/>
</dbReference>
<dbReference type="InterPro" id="IPR025867">
    <property type="entry name" value="MnmE_helical"/>
</dbReference>
<dbReference type="InterPro" id="IPR027417">
    <property type="entry name" value="P-loop_NTPase"/>
</dbReference>
<dbReference type="InterPro" id="IPR005225">
    <property type="entry name" value="Small_GTP-bd"/>
</dbReference>
<dbReference type="InterPro" id="IPR027266">
    <property type="entry name" value="TrmE/GcvT_dom1"/>
</dbReference>
<dbReference type="NCBIfam" id="TIGR00450">
    <property type="entry name" value="mnmE_trmE_thdF"/>
    <property type="match status" value="1"/>
</dbReference>
<dbReference type="NCBIfam" id="NF003661">
    <property type="entry name" value="PRK05291.1-3"/>
    <property type="match status" value="1"/>
</dbReference>
<dbReference type="NCBIfam" id="TIGR00231">
    <property type="entry name" value="small_GTP"/>
    <property type="match status" value="1"/>
</dbReference>
<dbReference type="PANTHER" id="PTHR42714">
    <property type="entry name" value="TRNA MODIFICATION GTPASE GTPBP3"/>
    <property type="match status" value="1"/>
</dbReference>
<dbReference type="PANTHER" id="PTHR42714:SF2">
    <property type="entry name" value="TRNA MODIFICATION GTPASE GTPBP3, MITOCHONDRIAL"/>
    <property type="match status" value="1"/>
</dbReference>
<dbReference type="Pfam" id="PF01926">
    <property type="entry name" value="MMR_HSR1"/>
    <property type="match status" value="1"/>
</dbReference>
<dbReference type="Pfam" id="PF12631">
    <property type="entry name" value="MnmE_helical"/>
    <property type="match status" value="1"/>
</dbReference>
<dbReference type="Pfam" id="PF10396">
    <property type="entry name" value="TrmE_N"/>
    <property type="match status" value="1"/>
</dbReference>
<dbReference type="PRINTS" id="PR00326">
    <property type="entry name" value="GTP1OBG"/>
</dbReference>
<dbReference type="SUPFAM" id="SSF52540">
    <property type="entry name" value="P-loop containing nucleoside triphosphate hydrolases"/>
    <property type="match status" value="1"/>
</dbReference>
<dbReference type="SUPFAM" id="SSF116878">
    <property type="entry name" value="TrmE connector domain"/>
    <property type="match status" value="1"/>
</dbReference>
<dbReference type="PROSITE" id="PS51709">
    <property type="entry name" value="G_TRME"/>
    <property type="match status" value="1"/>
</dbReference>
<comment type="function">
    <text evidence="1">Exhibits a very high intrinsic GTPase hydrolysis rate. Involved in the addition of a carboxymethylaminomethyl (cmnm) group at the wobble position (U34) of certain tRNAs, forming tRNA-cmnm(5)s(2)U34.</text>
</comment>
<comment type="cofactor">
    <cofactor evidence="1">
        <name>K(+)</name>
        <dbReference type="ChEBI" id="CHEBI:29103"/>
    </cofactor>
    <text evidence="1">Binds 1 potassium ion per subunit.</text>
</comment>
<comment type="subunit">
    <text evidence="1">Homodimer. Heterotetramer of two MnmE and two MnmG subunits.</text>
</comment>
<comment type="subcellular location">
    <subcellularLocation>
        <location evidence="1">Cytoplasm</location>
    </subcellularLocation>
</comment>
<comment type="similarity">
    <text evidence="1">Belongs to the TRAFAC class TrmE-Era-EngA-EngB-Septin-like GTPase superfamily. TrmE GTPase family.</text>
</comment>
<comment type="sequence caution" evidence="2">
    <conflict type="erroneous initiation">
        <sequence resource="EMBL-CDS" id="ABO05781"/>
    </conflict>
</comment>
<organism>
    <name type="scientific">Burkholderia mallei (strain NCTC 10247)</name>
    <dbReference type="NCBI Taxonomy" id="320389"/>
    <lineage>
        <taxon>Bacteria</taxon>
        <taxon>Pseudomonadati</taxon>
        <taxon>Pseudomonadota</taxon>
        <taxon>Betaproteobacteria</taxon>
        <taxon>Burkholderiales</taxon>
        <taxon>Burkholderiaceae</taxon>
        <taxon>Burkholderia</taxon>
        <taxon>pseudomallei group</taxon>
    </lineage>
</organism>
<name>MNME_BURM7</name>
<sequence>MLATDSDPIVAIATASGRGGIGVVRLSLGRAGEAAARALSDALCGARLMPRHASYVPFLDGAGEPLDRGIALYFPAPHSYTGEHVIELQGHGGPIVLQLLLQRCLDAGRAHGLRLAEPGEFTRRAFLNDKLDLAQAEAVADLIEASTEAAARSAGRSLDGAFSRDIHALVDDVIALRMLVEATLDFPEEEIDFLEAADARGKLAHIRERLAHVLGDARQGALLREGLSVVLAGQPNVGKSSLLNALAGAELAIVTPIAGTTRDKVAQTIQIEGIPLHIIDTAGLRETEDEVEKIGIARTWGEIERADVVLHLLDARSGLGPGDEAIAARFPDGVPVVRVLNKTDLTGAPASVTRTGGGAARADVCEVRLSAKRGDGIDLLRGELLRIAGWQAGAESVYLARERHLIALRAAQAHLARAAEHAEQNAQALDLFAEELRLAQERLNSITGEFTSDDLLGVIFSRFCIGK</sequence>
<reference key="1">
    <citation type="journal article" date="2010" name="Genome Biol. Evol.">
        <title>Continuing evolution of Burkholderia mallei through genome reduction and large-scale rearrangements.</title>
        <authorList>
            <person name="Losada L."/>
            <person name="Ronning C.M."/>
            <person name="DeShazer D."/>
            <person name="Woods D."/>
            <person name="Fedorova N."/>
            <person name="Kim H.S."/>
            <person name="Shabalina S.A."/>
            <person name="Pearson T.R."/>
            <person name="Brinkac L."/>
            <person name="Tan P."/>
            <person name="Nandi T."/>
            <person name="Crabtree J."/>
            <person name="Badger J."/>
            <person name="Beckstrom-Sternberg S."/>
            <person name="Saqib M."/>
            <person name="Schutzer S.E."/>
            <person name="Keim P."/>
            <person name="Nierman W.C."/>
        </authorList>
    </citation>
    <scope>NUCLEOTIDE SEQUENCE [LARGE SCALE GENOMIC DNA]</scope>
    <source>
        <strain>NCTC 10247</strain>
    </source>
</reference>